<dbReference type="EC" id="6.3.2.1" evidence="1"/>
<dbReference type="EMBL" id="CP000627">
    <property type="protein sequence ID" value="ABQ20956.1"/>
    <property type="molecule type" value="Genomic_DNA"/>
</dbReference>
<dbReference type="EMBL" id="CP001235">
    <property type="protein sequence ID" value="ACP08627.1"/>
    <property type="molecule type" value="Genomic_DNA"/>
</dbReference>
<dbReference type="RefSeq" id="WP_001195750.1">
    <property type="nucleotide sequence ID" value="NZ_JAACZH010000006.1"/>
</dbReference>
<dbReference type="SMR" id="A5F974"/>
<dbReference type="KEGG" id="vco:VC0395_A0122"/>
<dbReference type="KEGG" id="vcr:VC395_0608"/>
<dbReference type="PATRIC" id="fig|345073.21.peg.592"/>
<dbReference type="eggNOG" id="COG0414">
    <property type="taxonomic scope" value="Bacteria"/>
</dbReference>
<dbReference type="HOGENOM" id="CLU_047148_0_0_6"/>
<dbReference type="OrthoDB" id="9773087at2"/>
<dbReference type="UniPathway" id="UPA00028">
    <property type="reaction ID" value="UER00005"/>
</dbReference>
<dbReference type="Proteomes" id="UP000000249">
    <property type="component" value="Chromosome 2"/>
</dbReference>
<dbReference type="GO" id="GO:0005829">
    <property type="term" value="C:cytosol"/>
    <property type="evidence" value="ECO:0007669"/>
    <property type="project" value="TreeGrafter"/>
</dbReference>
<dbReference type="GO" id="GO:0005524">
    <property type="term" value="F:ATP binding"/>
    <property type="evidence" value="ECO:0007669"/>
    <property type="project" value="UniProtKB-KW"/>
</dbReference>
<dbReference type="GO" id="GO:0004592">
    <property type="term" value="F:pantoate-beta-alanine ligase activity"/>
    <property type="evidence" value="ECO:0007669"/>
    <property type="project" value="UniProtKB-UniRule"/>
</dbReference>
<dbReference type="GO" id="GO:0015940">
    <property type="term" value="P:pantothenate biosynthetic process"/>
    <property type="evidence" value="ECO:0007669"/>
    <property type="project" value="UniProtKB-UniRule"/>
</dbReference>
<dbReference type="CDD" id="cd00560">
    <property type="entry name" value="PanC"/>
    <property type="match status" value="1"/>
</dbReference>
<dbReference type="FunFam" id="3.30.1300.10:FF:000004">
    <property type="entry name" value="Pantothenate synthetase"/>
    <property type="match status" value="1"/>
</dbReference>
<dbReference type="FunFam" id="3.40.50.620:FF:000013">
    <property type="entry name" value="Pantothenate synthetase"/>
    <property type="match status" value="1"/>
</dbReference>
<dbReference type="Gene3D" id="3.40.50.620">
    <property type="entry name" value="HUPs"/>
    <property type="match status" value="1"/>
</dbReference>
<dbReference type="Gene3D" id="3.30.1300.10">
    <property type="entry name" value="Pantoate-beta-alanine ligase, C-terminal domain"/>
    <property type="match status" value="1"/>
</dbReference>
<dbReference type="HAMAP" id="MF_00158">
    <property type="entry name" value="PanC"/>
    <property type="match status" value="1"/>
</dbReference>
<dbReference type="InterPro" id="IPR004821">
    <property type="entry name" value="Cyt_trans-like"/>
</dbReference>
<dbReference type="InterPro" id="IPR003721">
    <property type="entry name" value="Pantoate_ligase"/>
</dbReference>
<dbReference type="InterPro" id="IPR042176">
    <property type="entry name" value="Pantoate_ligase_C"/>
</dbReference>
<dbReference type="InterPro" id="IPR014729">
    <property type="entry name" value="Rossmann-like_a/b/a_fold"/>
</dbReference>
<dbReference type="NCBIfam" id="TIGR00125">
    <property type="entry name" value="cyt_tran_rel"/>
    <property type="match status" value="1"/>
</dbReference>
<dbReference type="NCBIfam" id="TIGR00018">
    <property type="entry name" value="panC"/>
    <property type="match status" value="1"/>
</dbReference>
<dbReference type="PANTHER" id="PTHR21299">
    <property type="entry name" value="CYTIDYLATE KINASE/PANTOATE-BETA-ALANINE LIGASE"/>
    <property type="match status" value="1"/>
</dbReference>
<dbReference type="PANTHER" id="PTHR21299:SF1">
    <property type="entry name" value="PANTOATE--BETA-ALANINE LIGASE"/>
    <property type="match status" value="1"/>
</dbReference>
<dbReference type="Pfam" id="PF02569">
    <property type="entry name" value="Pantoate_ligase"/>
    <property type="match status" value="1"/>
</dbReference>
<dbReference type="SUPFAM" id="SSF52374">
    <property type="entry name" value="Nucleotidylyl transferase"/>
    <property type="match status" value="1"/>
</dbReference>
<proteinExistence type="inferred from homology"/>
<name>PANC_VIBC3</name>
<keyword id="KW-0067">ATP-binding</keyword>
<keyword id="KW-0963">Cytoplasm</keyword>
<keyword id="KW-0436">Ligase</keyword>
<keyword id="KW-0547">Nucleotide-binding</keyword>
<keyword id="KW-0566">Pantothenate biosynthesis</keyword>
<accession>A5F974</accession>
<accession>C3LXB7</accession>
<organism>
    <name type="scientific">Vibrio cholerae serotype O1 (strain ATCC 39541 / Classical Ogawa 395 / O395)</name>
    <dbReference type="NCBI Taxonomy" id="345073"/>
    <lineage>
        <taxon>Bacteria</taxon>
        <taxon>Pseudomonadati</taxon>
        <taxon>Pseudomonadota</taxon>
        <taxon>Gammaproteobacteria</taxon>
        <taxon>Vibrionales</taxon>
        <taxon>Vibrionaceae</taxon>
        <taxon>Vibrio</taxon>
    </lineage>
</organism>
<comment type="function">
    <text evidence="1">Catalyzes the condensation of pantoate with beta-alanine in an ATP-dependent reaction via a pantoyl-adenylate intermediate.</text>
</comment>
<comment type="catalytic activity">
    <reaction evidence="1">
        <text>(R)-pantoate + beta-alanine + ATP = (R)-pantothenate + AMP + diphosphate + H(+)</text>
        <dbReference type="Rhea" id="RHEA:10912"/>
        <dbReference type="ChEBI" id="CHEBI:15378"/>
        <dbReference type="ChEBI" id="CHEBI:15980"/>
        <dbReference type="ChEBI" id="CHEBI:29032"/>
        <dbReference type="ChEBI" id="CHEBI:30616"/>
        <dbReference type="ChEBI" id="CHEBI:33019"/>
        <dbReference type="ChEBI" id="CHEBI:57966"/>
        <dbReference type="ChEBI" id="CHEBI:456215"/>
        <dbReference type="EC" id="6.3.2.1"/>
    </reaction>
</comment>
<comment type="pathway">
    <text evidence="1">Cofactor biosynthesis; (R)-pantothenate biosynthesis; (R)-pantothenate from (R)-pantoate and beta-alanine: step 1/1.</text>
</comment>
<comment type="subunit">
    <text evidence="1">Homodimer.</text>
</comment>
<comment type="subcellular location">
    <subcellularLocation>
        <location evidence="1">Cytoplasm</location>
    </subcellularLocation>
</comment>
<comment type="miscellaneous">
    <text evidence="1">The reaction proceeds by a bi uni uni bi ping pong mechanism.</text>
</comment>
<comment type="similarity">
    <text evidence="1">Belongs to the pantothenate synthetase family.</text>
</comment>
<gene>
    <name evidence="1" type="primary">panC</name>
    <name type="ordered locus">VC0395_A0122</name>
    <name type="ordered locus">VC395_0608</name>
</gene>
<evidence type="ECO:0000255" key="1">
    <source>
        <dbReference type="HAMAP-Rule" id="MF_00158"/>
    </source>
</evidence>
<protein>
    <recommendedName>
        <fullName evidence="1">Pantothenate synthetase</fullName>
        <shortName evidence="1">PS</shortName>
        <ecNumber evidence="1">6.3.2.1</ecNumber>
    </recommendedName>
    <alternativeName>
        <fullName evidence="1">Pantoate--beta-alanine ligase</fullName>
    </alternativeName>
    <alternativeName>
        <fullName evidence="1">Pantoate-activating enzyme</fullName>
    </alternativeName>
</protein>
<reference key="1">
    <citation type="submission" date="2007-03" db="EMBL/GenBank/DDBJ databases">
        <authorList>
            <person name="Heidelberg J."/>
        </authorList>
    </citation>
    <scope>NUCLEOTIDE SEQUENCE [LARGE SCALE GENOMIC DNA]</scope>
    <source>
        <strain>ATCC 39541 / Classical Ogawa 395 / O395</strain>
    </source>
</reference>
<reference key="2">
    <citation type="journal article" date="2008" name="PLoS ONE">
        <title>A recalibrated molecular clock and independent origins for the cholera pandemic clones.</title>
        <authorList>
            <person name="Feng L."/>
            <person name="Reeves P.R."/>
            <person name="Lan R."/>
            <person name="Ren Y."/>
            <person name="Gao C."/>
            <person name="Zhou Z."/>
            <person name="Ren Y."/>
            <person name="Cheng J."/>
            <person name="Wang W."/>
            <person name="Wang J."/>
            <person name="Qian W."/>
            <person name="Li D."/>
            <person name="Wang L."/>
        </authorList>
    </citation>
    <scope>NUCLEOTIDE SEQUENCE [LARGE SCALE GENOMIC DNA]</scope>
    <source>
        <strain>ATCC 39541 / Classical Ogawa 395 / O395</strain>
    </source>
</reference>
<sequence length="293" mass="32855">MQVFADIAVLREQIKQIKREGRRVAFVPTMGNLHEGHLTLVRKARELADVVVVSIFVNPMQFDRAEDLKNYPRTLEEDLSKLNGEGVDLVLTPTPETMYPQGLDKQTFVEVPGLSYMLEGASRPGHFRGVATIVTKLFNIVQPDVACFGEKDFQQLAVIRQMVEDLCMDIEIVGVATVRELDGLAMSSRNNLLTLDERQRAPVLARTMRWISSAIRGGRDDYPSIIEDAVDQLRAADLEPDEIFIRDARTLLPISSESKQAVILMSAFLGKVRLIDNQVLDLQTDTKASSEEE</sequence>
<feature type="chain" id="PRO_1000097125" description="Pantothenate synthetase">
    <location>
        <begin position="1"/>
        <end position="293"/>
    </location>
</feature>
<feature type="active site" description="Proton donor" evidence="1">
    <location>
        <position position="37"/>
    </location>
</feature>
<feature type="binding site" evidence="1">
    <location>
        <begin position="30"/>
        <end position="37"/>
    </location>
    <ligand>
        <name>ATP</name>
        <dbReference type="ChEBI" id="CHEBI:30616"/>
    </ligand>
</feature>
<feature type="binding site" evidence="1">
    <location>
        <position position="61"/>
    </location>
    <ligand>
        <name>(R)-pantoate</name>
        <dbReference type="ChEBI" id="CHEBI:15980"/>
    </ligand>
</feature>
<feature type="binding site" evidence="1">
    <location>
        <position position="61"/>
    </location>
    <ligand>
        <name>beta-alanine</name>
        <dbReference type="ChEBI" id="CHEBI:57966"/>
    </ligand>
</feature>
<feature type="binding site" evidence="1">
    <location>
        <begin position="149"/>
        <end position="152"/>
    </location>
    <ligand>
        <name>ATP</name>
        <dbReference type="ChEBI" id="CHEBI:30616"/>
    </ligand>
</feature>
<feature type="binding site" evidence="1">
    <location>
        <position position="155"/>
    </location>
    <ligand>
        <name>(R)-pantoate</name>
        <dbReference type="ChEBI" id="CHEBI:15980"/>
    </ligand>
</feature>
<feature type="binding site" evidence="1">
    <location>
        <position position="178"/>
    </location>
    <ligand>
        <name>ATP</name>
        <dbReference type="ChEBI" id="CHEBI:30616"/>
    </ligand>
</feature>
<feature type="binding site" evidence="1">
    <location>
        <begin position="186"/>
        <end position="189"/>
    </location>
    <ligand>
        <name>ATP</name>
        <dbReference type="ChEBI" id="CHEBI:30616"/>
    </ligand>
</feature>